<name>PSB1_PETHY</name>
<evidence type="ECO:0000250" key="1"/>
<evidence type="ECO:0000255" key="2">
    <source>
        <dbReference type="PROSITE-ProRule" id="PRU00809"/>
    </source>
</evidence>
<sequence>MTKQQANWSPYDNNGGTCVAVAGADYCVIAADTRMSTGYNILTRDYSKIIKLADKCVMASSGFQADVRALQKVLASRHLIYQHQHNKQMSCPAMGQLLSNTLYYKRFFPYYSFNVLGGLDSEGKGCVFTYDAVGSYERVGYSSQGSGSTLIMPFLDNQLKSPSPLLLPAQDAVTPLSEAEAIDLVKTCFASATERDIYTGDRLEIVILNASGIRREEMELRKD</sequence>
<keyword id="KW-0963">Cytoplasm</keyword>
<keyword id="KW-0539">Nucleus</keyword>
<keyword id="KW-0647">Proteasome</keyword>
<protein>
    <recommendedName>
        <fullName>Proteasome subunit beta type-1</fullName>
    </recommendedName>
    <alternativeName>
        <fullName>20S proteasome alpha subunit F</fullName>
    </alternativeName>
    <alternativeName>
        <fullName>20S proteasome subunit beta-6</fullName>
    </alternativeName>
</protein>
<proteinExistence type="evidence at transcript level"/>
<dbReference type="EMBL" id="AF088915">
    <property type="protein sequence ID" value="AAC35983.1"/>
    <property type="molecule type" value="mRNA"/>
</dbReference>
<dbReference type="SMR" id="O82531"/>
<dbReference type="GO" id="GO:0005737">
    <property type="term" value="C:cytoplasm"/>
    <property type="evidence" value="ECO:0007669"/>
    <property type="project" value="UniProtKB-SubCell"/>
</dbReference>
<dbReference type="GO" id="GO:0005634">
    <property type="term" value="C:nucleus"/>
    <property type="evidence" value="ECO:0007669"/>
    <property type="project" value="UniProtKB-SubCell"/>
</dbReference>
<dbReference type="GO" id="GO:0019774">
    <property type="term" value="C:proteasome core complex, beta-subunit complex"/>
    <property type="evidence" value="ECO:0000250"/>
    <property type="project" value="UniProtKB"/>
</dbReference>
<dbReference type="GO" id="GO:0051603">
    <property type="term" value="P:proteolysis involved in protein catabolic process"/>
    <property type="evidence" value="ECO:0007669"/>
    <property type="project" value="InterPro"/>
</dbReference>
<dbReference type="CDD" id="cd03757">
    <property type="entry name" value="proteasome_beta_type_1"/>
    <property type="match status" value="1"/>
</dbReference>
<dbReference type="FunFam" id="3.60.20.10:FF:000040">
    <property type="entry name" value="Proteasome subunit beta"/>
    <property type="match status" value="1"/>
</dbReference>
<dbReference type="Gene3D" id="3.60.20.10">
    <property type="entry name" value="Glutamine Phosphoribosylpyrophosphate, subunit 1, domain 1"/>
    <property type="match status" value="1"/>
</dbReference>
<dbReference type="InterPro" id="IPR029055">
    <property type="entry name" value="Ntn_hydrolases_N"/>
</dbReference>
<dbReference type="InterPro" id="IPR016050">
    <property type="entry name" value="Proteasome_bsu_CS"/>
</dbReference>
<dbReference type="InterPro" id="IPR001353">
    <property type="entry name" value="Proteasome_sua/b"/>
</dbReference>
<dbReference type="InterPro" id="IPR023333">
    <property type="entry name" value="Proteasome_suB-type"/>
</dbReference>
<dbReference type="PANTHER" id="PTHR32194">
    <property type="entry name" value="METALLOPROTEASE TLDD"/>
    <property type="match status" value="1"/>
</dbReference>
<dbReference type="PANTHER" id="PTHR32194:SF2">
    <property type="entry name" value="PROTEASOME SUBUNIT BETA TYPE-1"/>
    <property type="match status" value="1"/>
</dbReference>
<dbReference type="Pfam" id="PF00227">
    <property type="entry name" value="Proteasome"/>
    <property type="match status" value="1"/>
</dbReference>
<dbReference type="SUPFAM" id="SSF56235">
    <property type="entry name" value="N-terminal nucleophile aminohydrolases (Ntn hydrolases)"/>
    <property type="match status" value="1"/>
</dbReference>
<dbReference type="PROSITE" id="PS00854">
    <property type="entry name" value="PROTEASOME_BETA_1"/>
    <property type="match status" value="1"/>
</dbReference>
<dbReference type="PROSITE" id="PS51476">
    <property type="entry name" value="PROTEASOME_BETA_2"/>
    <property type="match status" value="1"/>
</dbReference>
<gene>
    <name type="primary">PBF1</name>
</gene>
<accession>O82531</accession>
<feature type="chain" id="PRO_0000148040" description="Proteasome subunit beta type-1">
    <location>
        <begin position="1"/>
        <end position="223"/>
    </location>
</feature>
<reference key="1">
    <citation type="submission" date="1998-09" db="EMBL/GenBank/DDBJ databases">
        <authorList>
            <person name="Lee H.S."/>
            <person name="Moon J.H."/>
            <person name="Kim S.G."/>
        </authorList>
    </citation>
    <scope>NUCLEOTIDE SEQUENCE [MRNA]</scope>
    <source>
        <tissue>Petal</tissue>
    </source>
</reference>
<comment type="function">
    <text>Non-catalytic component of the proteasome, a multicatalytic proteinase complex which is characterized by its ability to cleave peptides with Arg, Phe, Tyr, Leu, and Glu adjacent to the leaving group at neutral or slightly basic pH. The proteasome has an ATP-dependent proteolytic activity.</text>
</comment>
<comment type="subunit">
    <text evidence="1">The 26S proteasome consists of a 20S proteasome core and two 19S regulatory subunits. The 20S proteasome core is composed of 28 subunits that are arranged in four stacked rings, resulting in a barrel-shaped structure. The two end rings are each formed by seven alpha subunits, and the two central rings are each formed by seven beta subunits. The catalytic chamber with the active sites is on the inside of the barrel (By similarity).</text>
</comment>
<comment type="subcellular location">
    <subcellularLocation>
        <location evidence="2">Cytoplasm</location>
    </subcellularLocation>
    <subcellularLocation>
        <location evidence="1">Nucleus</location>
    </subcellularLocation>
</comment>
<comment type="similarity">
    <text evidence="2">Belongs to the peptidase T1B family.</text>
</comment>
<organism>
    <name type="scientific">Petunia hybrida</name>
    <name type="common">Petunia</name>
    <dbReference type="NCBI Taxonomy" id="4102"/>
    <lineage>
        <taxon>Eukaryota</taxon>
        <taxon>Viridiplantae</taxon>
        <taxon>Streptophyta</taxon>
        <taxon>Embryophyta</taxon>
        <taxon>Tracheophyta</taxon>
        <taxon>Spermatophyta</taxon>
        <taxon>Magnoliopsida</taxon>
        <taxon>eudicotyledons</taxon>
        <taxon>Gunneridae</taxon>
        <taxon>Pentapetalae</taxon>
        <taxon>asterids</taxon>
        <taxon>lamiids</taxon>
        <taxon>Solanales</taxon>
        <taxon>Solanaceae</taxon>
        <taxon>Petunioideae</taxon>
        <taxon>Petunia</taxon>
    </lineage>
</organism>